<protein>
    <recommendedName>
        <fullName evidence="1">Photosystem II reaction center protein M</fullName>
        <shortName evidence="1">PSII-M</shortName>
    </recommendedName>
</protein>
<dbReference type="EMBL" id="CT978603">
    <property type="protein sequence ID" value="CAK27323.1"/>
    <property type="status" value="ALT_INIT"/>
    <property type="molecule type" value="Genomic_DNA"/>
</dbReference>
<dbReference type="SMR" id="A5GR14"/>
<dbReference type="STRING" id="316278.SynRCC307_0420"/>
<dbReference type="KEGG" id="syr:SynRCC307_0420"/>
<dbReference type="eggNOG" id="ENOG50339PB">
    <property type="taxonomic scope" value="Bacteria"/>
</dbReference>
<dbReference type="HOGENOM" id="CLU_215415_0_0_3"/>
<dbReference type="OrthoDB" id="532820at2"/>
<dbReference type="Proteomes" id="UP000001115">
    <property type="component" value="Chromosome"/>
</dbReference>
<dbReference type="GO" id="GO:0009523">
    <property type="term" value="C:photosystem II"/>
    <property type="evidence" value="ECO:0007669"/>
    <property type="project" value="UniProtKB-KW"/>
</dbReference>
<dbReference type="GO" id="GO:0031676">
    <property type="term" value="C:plasma membrane-derived thylakoid membrane"/>
    <property type="evidence" value="ECO:0007669"/>
    <property type="project" value="UniProtKB-SubCell"/>
</dbReference>
<dbReference type="GO" id="GO:0019684">
    <property type="term" value="P:photosynthesis, light reaction"/>
    <property type="evidence" value="ECO:0007669"/>
    <property type="project" value="InterPro"/>
</dbReference>
<dbReference type="HAMAP" id="MF_00438">
    <property type="entry name" value="PSII_PsbM"/>
    <property type="match status" value="1"/>
</dbReference>
<dbReference type="InterPro" id="IPR007826">
    <property type="entry name" value="PSII_PsbM"/>
</dbReference>
<dbReference type="InterPro" id="IPR037269">
    <property type="entry name" value="PSII_PsbM_sf"/>
</dbReference>
<dbReference type="NCBIfam" id="TIGR03038">
    <property type="entry name" value="PS_II_psbM"/>
    <property type="match status" value="1"/>
</dbReference>
<dbReference type="PANTHER" id="PTHR35774">
    <property type="entry name" value="PHOTOSYSTEM II REACTION CENTER PROTEIN M"/>
    <property type="match status" value="1"/>
</dbReference>
<dbReference type="PANTHER" id="PTHR35774:SF1">
    <property type="entry name" value="PHOTOSYSTEM II REACTION CENTER PROTEIN M"/>
    <property type="match status" value="1"/>
</dbReference>
<dbReference type="Pfam" id="PF05151">
    <property type="entry name" value="PsbM"/>
    <property type="match status" value="1"/>
</dbReference>
<dbReference type="SUPFAM" id="SSF161033">
    <property type="entry name" value="Photosystem II reaction center protein M, PsbM"/>
    <property type="match status" value="1"/>
</dbReference>
<sequence length="34" mass="3813">METNDLGFVATLLFVLVPAIFLIILYIQTNSREG</sequence>
<feature type="chain" id="PRO_0000325714" description="Photosystem II reaction center protein M">
    <location>
        <begin position="1"/>
        <end position="34"/>
    </location>
</feature>
<feature type="transmembrane region" description="Helical" evidence="1">
    <location>
        <begin position="7"/>
        <end position="27"/>
    </location>
</feature>
<gene>
    <name evidence="1" type="primary">psbM</name>
    <name type="ordered locus">SynRCC307_0420</name>
</gene>
<accession>A5GR14</accession>
<evidence type="ECO:0000255" key="1">
    <source>
        <dbReference type="HAMAP-Rule" id="MF_00438"/>
    </source>
</evidence>
<evidence type="ECO:0000305" key="2"/>
<organism>
    <name type="scientific">Synechococcus sp. (strain RCC307)</name>
    <dbReference type="NCBI Taxonomy" id="316278"/>
    <lineage>
        <taxon>Bacteria</taxon>
        <taxon>Bacillati</taxon>
        <taxon>Cyanobacteriota</taxon>
        <taxon>Cyanophyceae</taxon>
        <taxon>Synechococcales</taxon>
        <taxon>Synechococcaceae</taxon>
        <taxon>Synechococcus</taxon>
    </lineage>
</organism>
<reference key="1">
    <citation type="submission" date="2006-05" db="EMBL/GenBank/DDBJ databases">
        <authorList>
            <consortium name="Genoscope"/>
        </authorList>
    </citation>
    <scope>NUCLEOTIDE SEQUENCE [LARGE SCALE GENOMIC DNA]</scope>
    <source>
        <strain>RCC307</strain>
    </source>
</reference>
<name>PSBM_SYNR3</name>
<keyword id="KW-0472">Membrane</keyword>
<keyword id="KW-0602">Photosynthesis</keyword>
<keyword id="KW-0604">Photosystem II</keyword>
<keyword id="KW-0674">Reaction center</keyword>
<keyword id="KW-1185">Reference proteome</keyword>
<keyword id="KW-0793">Thylakoid</keyword>
<keyword id="KW-0812">Transmembrane</keyword>
<keyword id="KW-1133">Transmembrane helix</keyword>
<proteinExistence type="inferred from homology"/>
<comment type="function">
    <text evidence="1">One of the components of the core complex of photosystem II (PSII). PSII is a light-driven water:plastoquinone oxidoreductase that uses light energy to abstract electrons from H(2)O, generating O(2) and a proton gradient subsequently used for ATP formation. It consists of a core antenna complex that captures photons, and an electron transfer chain that converts photonic excitation into a charge separation. This subunit is found at the monomer-monomer interface.</text>
</comment>
<comment type="subunit">
    <text evidence="1">PSII is composed of 1 copy each of membrane proteins PsbA, PsbB, PsbC, PsbD, PsbE, PsbF, PsbH, PsbI, PsbJ, PsbK, PsbL, PsbM, PsbT, PsbX, PsbY, PsbZ, Psb30/Ycf12, peripheral proteins PsbO, CyanoQ (PsbQ), PsbU, PsbV and a large number of cofactors. It forms dimeric complexes.</text>
</comment>
<comment type="subcellular location">
    <subcellularLocation>
        <location evidence="1">Cellular thylakoid membrane</location>
        <topology evidence="1">Single-pass membrane protein</topology>
    </subcellularLocation>
</comment>
<comment type="similarity">
    <text evidence="1">Belongs to the PsbM family.</text>
</comment>
<comment type="sequence caution" evidence="2">
    <conflict type="erroneous initiation">
        <sequence resource="EMBL-CDS" id="CAK27323"/>
    </conflict>
    <text>Extended N-terminus.</text>
</comment>